<dbReference type="EMBL" id="CP000930">
    <property type="protein sequence ID" value="ABZ83966.1"/>
    <property type="molecule type" value="Genomic_DNA"/>
</dbReference>
<dbReference type="RefSeq" id="WP_012282482.1">
    <property type="nucleotide sequence ID" value="NC_010337.2"/>
</dbReference>
<dbReference type="SMR" id="B0TC67"/>
<dbReference type="STRING" id="498761.HM1_1389"/>
<dbReference type="KEGG" id="hmo:HM1_1389"/>
<dbReference type="eggNOG" id="COG0198">
    <property type="taxonomic scope" value="Bacteria"/>
</dbReference>
<dbReference type="HOGENOM" id="CLU_093315_2_0_9"/>
<dbReference type="OrthoDB" id="9807419at2"/>
<dbReference type="Proteomes" id="UP000008550">
    <property type="component" value="Chromosome"/>
</dbReference>
<dbReference type="GO" id="GO:1990904">
    <property type="term" value="C:ribonucleoprotein complex"/>
    <property type="evidence" value="ECO:0007669"/>
    <property type="project" value="UniProtKB-KW"/>
</dbReference>
<dbReference type="GO" id="GO:0005840">
    <property type="term" value="C:ribosome"/>
    <property type="evidence" value="ECO:0007669"/>
    <property type="project" value="UniProtKB-KW"/>
</dbReference>
<dbReference type="GO" id="GO:0019843">
    <property type="term" value="F:rRNA binding"/>
    <property type="evidence" value="ECO:0007669"/>
    <property type="project" value="UniProtKB-UniRule"/>
</dbReference>
<dbReference type="GO" id="GO:0003735">
    <property type="term" value="F:structural constituent of ribosome"/>
    <property type="evidence" value="ECO:0007669"/>
    <property type="project" value="InterPro"/>
</dbReference>
<dbReference type="GO" id="GO:0006412">
    <property type="term" value="P:translation"/>
    <property type="evidence" value="ECO:0007669"/>
    <property type="project" value="UniProtKB-UniRule"/>
</dbReference>
<dbReference type="CDD" id="cd06089">
    <property type="entry name" value="KOW_RPL26"/>
    <property type="match status" value="1"/>
</dbReference>
<dbReference type="FunFam" id="2.30.30.30:FF:000004">
    <property type="entry name" value="50S ribosomal protein L24"/>
    <property type="match status" value="1"/>
</dbReference>
<dbReference type="Gene3D" id="2.30.30.30">
    <property type="match status" value="1"/>
</dbReference>
<dbReference type="HAMAP" id="MF_01326_B">
    <property type="entry name" value="Ribosomal_uL24_B"/>
    <property type="match status" value="1"/>
</dbReference>
<dbReference type="InterPro" id="IPR005824">
    <property type="entry name" value="KOW"/>
</dbReference>
<dbReference type="InterPro" id="IPR014722">
    <property type="entry name" value="Rib_uL2_dom2"/>
</dbReference>
<dbReference type="InterPro" id="IPR003256">
    <property type="entry name" value="Ribosomal_uL24"/>
</dbReference>
<dbReference type="InterPro" id="IPR005825">
    <property type="entry name" value="Ribosomal_uL24_CS"/>
</dbReference>
<dbReference type="InterPro" id="IPR041988">
    <property type="entry name" value="Ribosomal_uL24_KOW"/>
</dbReference>
<dbReference type="InterPro" id="IPR008991">
    <property type="entry name" value="Translation_prot_SH3-like_sf"/>
</dbReference>
<dbReference type="NCBIfam" id="TIGR01079">
    <property type="entry name" value="rplX_bact"/>
    <property type="match status" value="1"/>
</dbReference>
<dbReference type="PANTHER" id="PTHR12903">
    <property type="entry name" value="MITOCHONDRIAL RIBOSOMAL PROTEIN L24"/>
    <property type="match status" value="1"/>
</dbReference>
<dbReference type="Pfam" id="PF00467">
    <property type="entry name" value="KOW"/>
    <property type="match status" value="1"/>
</dbReference>
<dbReference type="Pfam" id="PF17136">
    <property type="entry name" value="ribosomal_L24"/>
    <property type="match status" value="1"/>
</dbReference>
<dbReference type="SMART" id="SM00739">
    <property type="entry name" value="KOW"/>
    <property type="match status" value="1"/>
</dbReference>
<dbReference type="SUPFAM" id="SSF50104">
    <property type="entry name" value="Translation proteins SH3-like domain"/>
    <property type="match status" value="1"/>
</dbReference>
<dbReference type="PROSITE" id="PS01108">
    <property type="entry name" value="RIBOSOMAL_L24"/>
    <property type="match status" value="1"/>
</dbReference>
<gene>
    <name evidence="1" type="primary">rplX</name>
    <name type="ordered locus">Helmi_13410</name>
    <name type="ORF">HM1_1389</name>
</gene>
<comment type="function">
    <text evidence="1">One of two assembly initiator proteins, it binds directly to the 5'-end of the 23S rRNA, where it nucleates assembly of the 50S subunit.</text>
</comment>
<comment type="function">
    <text evidence="1">One of the proteins that surrounds the polypeptide exit tunnel on the outside of the subunit.</text>
</comment>
<comment type="subunit">
    <text evidence="1">Part of the 50S ribosomal subunit.</text>
</comment>
<comment type="similarity">
    <text evidence="1">Belongs to the universal ribosomal protein uL24 family.</text>
</comment>
<feature type="chain" id="PRO_0000355685" description="Large ribosomal subunit protein uL24">
    <location>
        <begin position="1"/>
        <end position="111"/>
    </location>
</feature>
<reference key="1">
    <citation type="journal article" date="2008" name="J. Bacteriol.">
        <title>The genome of Heliobacterium modesticaldum, a phototrophic representative of the Firmicutes containing the simplest photosynthetic apparatus.</title>
        <authorList>
            <person name="Sattley W.M."/>
            <person name="Madigan M.T."/>
            <person name="Swingley W.D."/>
            <person name="Cheung P.C."/>
            <person name="Clocksin K.M."/>
            <person name="Conrad A.L."/>
            <person name="Dejesa L.C."/>
            <person name="Honchak B.M."/>
            <person name="Jung D.O."/>
            <person name="Karbach L.E."/>
            <person name="Kurdoglu A."/>
            <person name="Lahiri S."/>
            <person name="Mastrian S.D."/>
            <person name="Page L.E."/>
            <person name="Taylor H.L."/>
            <person name="Wang Z.T."/>
            <person name="Raymond J."/>
            <person name="Chen M."/>
            <person name="Blankenship R.E."/>
            <person name="Touchman J.W."/>
        </authorList>
    </citation>
    <scope>NUCLEOTIDE SEQUENCE [LARGE SCALE GENOMIC DNA]</scope>
    <source>
        <strain>ATCC 51547 / Ice1</strain>
    </source>
</reference>
<name>RL24_HELMI</name>
<protein>
    <recommendedName>
        <fullName evidence="1">Large ribosomal subunit protein uL24</fullName>
    </recommendedName>
    <alternativeName>
        <fullName evidence="2">50S ribosomal protein L24</fullName>
    </alternativeName>
</protein>
<keyword id="KW-1185">Reference proteome</keyword>
<keyword id="KW-0687">Ribonucleoprotein</keyword>
<keyword id="KW-0689">Ribosomal protein</keyword>
<keyword id="KW-0694">RNA-binding</keyword>
<keyword id="KW-0699">rRNA-binding</keyword>
<proteinExistence type="inferred from homology"/>
<sequence>MANPKVHVRKGDLVQVITGKDAGKKGKIIEVIPAKNRVVVEKVNIVKRHSKPSKTNPQGGIIEKEAPIDASNVMIFCPKCDRPVRSGHKFLENGDKARICRKCGDVLDKDK</sequence>
<accession>B0TC67</accession>
<evidence type="ECO:0000255" key="1">
    <source>
        <dbReference type="HAMAP-Rule" id="MF_01326"/>
    </source>
</evidence>
<evidence type="ECO:0000305" key="2"/>
<organism>
    <name type="scientific">Heliobacterium modesticaldum (strain ATCC 51547 / Ice1)</name>
    <dbReference type="NCBI Taxonomy" id="498761"/>
    <lineage>
        <taxon>Bacteria</taxon>
        <taxon>Bacillati</taxon>
        <taxon>Bacillota</taxon>
        <taxon>Clostridia</taxon>
        <taxon>Eubacteriales</taxon>
        <taxon>Heliobacteriaceae</taxon>
        <taxon>Heliomicrobium</taxon>
    </lineage>
</organism>